<gene>
    <name evidence="1" type="primary">clsA</name>
    <name type="synonym">cls</name>
    <name type="ordered locus">SeHA_C1930</name>
</gene>
<accession>B4TJM2</accession>
<comment type="function">
    <text evidence="1">Catalyzes the reversible phosphatidyl group transfer from one phosphatidylglycerol molecule to another to form cardiolipin (CL) (diphosphatidylglycerol) and glycerol.</text>
</comment>
<comment type="catalytic activity">
    <reaction evidence="1">
        <text>2 a 1,2-diacyl-sn-glycero-3-phospho-(1'-sn-glycerol) = a cardiolipin + glycerol</text>
        <dbReference type="Rhea" id="RHEA:31451"/>
        <dbReference type="ChEBI" id="CHEBI:17754"/>
        <dbReference type="ChEBI" id="CHEBI:62237"/>
        <dbReference type="ChEBI" id="CHEBI:64716"/>
    </reaction>
</comment>
<comment type="subcellular location">
    <subcellularLocation>
        <location evidence="1">Cell inner membrane</location>
        <topology evidence="1">Multi-pass membrane protein</topology>
    </subcellularLocation>
</comment>
<comment type="similarity">
    <text evidence="1">Belongs to the phospholipase D family. Cardiolipin synthase subfamily. ClsA sub-subfamily.</text>
</comment>
<evidence type="ECO:0000255" key="1">
    <source>
        <dbReference type="HAMAP-Rule" id="MF_00190"/>
    </source>
</evidence>
<proteinExistence type="inferred from homology"/>
<reference key="1">
    <citation type="journal article" date="2011" name="J. Bacteriol.">
        <title>Comparative genomics of 28 Salmonella enterica isolates: evidence for CRISPR-mediated adaptive sublineage evolution.</title>
        <authorList>
            <person name="Fricke W.F."/>
            <person name="Mammel M.K."/>
            <person name="McDermott P.F."/>
            <person name="Tartera C."/>
            <person name="White D.G."/>
            <person name="Leclerc J.E."/>
            <person name="Ravel J."/>
            <person name="Cebula T.A."/>
        </authorList>
    </citation>
    <scope>NUCLEOTIDE SEQUENCE [LARGE SCALE GENOMIC DNA]</scope>
    <source>
        <strain>SL476</strain>
    </source>
</reference>
<protein>
    <recommendedName>
        <fullName evidence="1">Cardiolipin synthase A</fullName>
        <shortName evidence="1">CL synthase</shortName>
        <ecNumber evidence="1">2.7.8.-</ecNumber>
    </recommendedName>
</protein>
<name>CLSA_SALHS</name>
<feature type="chain" id="PRO_1000098915" description="Cardiolipin synthase A">
    <location>
        <begin position="1"/>
        <end position="486"/>
    </location>
</feature>
<feature type="transmembrane region" description="Helical" evidence="1">
    <location>
        <begin position="3"/>
        <end position="23"/>
    </location>
</feature>
<feature type="transmembrane region" description="Helical" evidence="1">
    <location>
        <begin position="38"/>
        <end position="58"/>
    </location>
</feature>
<feature type="domain" description="PLD phosphodiesterase 1" evidence="1">
    <location>
        <begin position="219"/>
        <end position="246"/>
    </location>
</feature>
<feature type="domain" description="PLD phosphodiesterase 2" evidence="1">
    <location>
        <begin position="399"/>
        <end position="426"/>
    </location>
</feature>
<feature type="active site" evidence="1">
    <location>
        <position position="224"/>
    </location>
</feature>
<feature type="active site" evidence="1">
    <location>
        <position position="226"/>
    </location>
</feature>
<feature type="active site" evidence="1">
    <location>
        <position position="231"/>
    </location>
</feature>
<feature type="active site" evidence="1">
    <location>
        <position position="404"/>
    </location>
</feature>
<feature type="active site" evidence="1">
    <location>
        <position position="406"/>
    </location>
</feature>
<feature type="active site" evidence="1">
    <location>
        <position position="411"/>
    </location>
</feature>
<keyword id="KW-0997">Cell inner membrane</keyword>
<keyword id="KW-1003">Cell membrane</keyword>
<keyword id="KW-0444">Lipid biosynthesis</keyword>
<keyword id="KW-0443">Lipid metabolism</keyword>
<keyword id="KW-0472">Membrane</keyword>
<keyword id="KW-0594">Phospholipid biosynthesis</keyword>
<keyword id="KW-1208">Phospholipid metabolism</keyword>
<keyword id="KW-0677">Repeat</keyword>
<keyword id="KW-0808">Transferase</keyword>
<keyword id="KW-0812">Transmembrane</keyword>
<keyword id="KW-1133">Transmembrane helix</keyword>
<organism>
    <name type="scientific">Salmonella heidelberg (strain SL476)</name>
    <dbReference type="NCBI Taxonomy" id="454169"/>
    <lineage>
        <taxon>Bacteria</taxon>
        <taxon>Pseudomonadati</taxon>
        <taxon>Pseudomonadota</taxon>
        <taxon>Gammaproteobacteria</taxon>
        <taxon>Enterobacterales</taxon>
        <taxon>Enterobacteriaceae</taxon>
        <taxon>Salmonella</taxon>
    </lineage>
</organism>
<sequence length="486" mass="54734">MTTFYTVVSWLVILGYWVLIAGVTLRILMKRRAVPSAMAWLLIIYILPLVGIIAYLSVGELHLGKRRAERARAMWPSTAKWLNDLKACKHIFAQENSSVASSLFKLCERRQGIAGVKGNQLQLLTDSDDVMQALIRDIQLARHNIEMVFYIWQPGGMADQVAESLMAAARRGIHCRLMLDSAGSVAFFRSPWAAMMRNAGIEVVEALKVNLMRVFLRRMDLRQHRKMVMIDNYIAYTGSMNMVDPRFFKQDAGVGQWVDLMARMEGPVATAMGIVYSCDWEIETGKRILPPPPDVNIMPFEQASGHTIHTIASGPGFPEDLIHQALLTATYAAREYLIMTTPYFVPSDDLLHAICTAAQRGVDVSIILPRKNDSLLVGWASRAFFSELLAAGVKIYQFEGGLLHTKSVLVDGELSLVGTVNLDMRSLWLNFEITLVIDDTGFGADLAAVQDDYISRSRLLDARLWVKRPLWQRITERLFYFFSPLL</sequence>
<dbReference type="EC" id="2.7.8.-" evidence="1"/>
<dbReference type="EMBL" id="CP001120">
    <property type="protein sequence ID" value="ACF66484.1"/>
    <property type="molecule type" value="Genomic_DNA"/>
</dbReference>
<dbReference type="RefSeq" id="WP_000206886.1">
    <property type="nucleotide sequence ID" value="NC_011083.1"/>
</dbReference>
<dbReference type="SMR" id="B4TJM2"/>
<dbReference type="KEGG" id="seh:SeHA_C1930"/>
<dbReference type="HOGENOM" id="CLU_038053_1_0_6"/>
<dbReference type="Proteomes" id="UP000001866">
    <property type="component" value="Chromosome"/>
</dbReference>
<dbReference type="GO" id="GO:0005886">
    <property type="term" value="C:plasma membrane"/>
    <property type="evidence" value="ECO:0007669"/>
    <property type="project" value="UniProtKB-SubCell"/>
</dbReference>
<dbReference type="GO" id="GO:0008808">
    <property type="term" value="F:cardiolipin synthase activity"/>
    <property type="evidence" value="ECO:0007669"/>
    <property type="project" value="InterPro"/>
</dbReference>
<dbReference type="GO" id="GO:0032049">
    <property type="term" value="P:cardiolipin biosynthetic process"/>
    <property type="evidence" value="ECO:0007669"/>
    <property type="project" value="InterPro"/>
</dbReference>
<dbReference type="CDD" id="cd09152">
    <property type="entry name" value="PLDc_EcCLS_like_1"/>
    <property type="match status" value="1"/>
</dbReference>
<dbReference type="CDD" id="cd09158">
    <property type="entry name" value="PLDc_EcCLS_like_2"/>
    <property type="match status" value="1"/>
</dbReference>
<dbReference type="FunFam" id="3.30.870.10:FF:000002">
    <property type="entry name" value="Cardiolipin synthase A"/>
    <property type="match status" value="1"/>
</dbReference>
<dbReference type="FunFam" id="3.30.870.10:FF:000003">
    <property type="entry name" value="Cardiolipin synthase A"/>
    <property type="match status" value="1"/>
</dbReference>
<dbReference type="Gene3D" id="3.30.870.10">
    <property type="entry name" value="Endonuclease Chain A"/>
    <property type="match status" value="2"/>
</dbReference>
<dbReference type="HAMAP" id="MF_00190">
    <property type="entry name" value="Cardiolipin_synth_ClsA"/>
    <property type="match status" value="1"/>
</dbReference>
<dbReference type="InterPro" id="IPR022924">
    <property type="entry name" value="Cardiolipin_synthase"/>
</dbReference>
<dbReference type="InterPro" id="IPR030840">
    <property type="entry name" value="CL_synthase_A"/>
</dbReference>
<dbReference type="InterPro" id="IPR027379">
    <property type="entry name" value="CLS_N"/>
</dbReference>
<dbReference type="InterPro" id="IPR025202">
    <property type="entry name" value="PLD-like_dom"/>
</dbReference>
<dbReference type="InterPro" id="IPR001736">
    <property type="entry name" value="PLipase_D/transphosphatidylase"/>
</dbReference>
<dbReference type="NCBIfam" id="TIGR04265">
    <property type="entry name" value="bac_cardiolipin"/>
    <property type="match status" value="1"/>
</dbReference>
<dbReference type="PANTHER" id="PTHR21248">
    <property type="entry name" value="CARDIOLIPIN SYNTHASE"/>
    <property type="match status" value="1"/>
</dbReference>
<dbReference type="PANTHER" id="PTHR21248:SF22">
    <property type="entry name" value="PHOSPHOLIPASE D"/>
    <property type="match status" value="1"/>
</dbReference>
<dbReference type="Pfam" id="PF13091">
    <property type="entry name" value="PLDc_2"/>
    <property type="match status" value="2"/>
</dbReference>
<dbReference type="Pfam" id="PF13396">
    <property type="entry name" value="PLDc_N"/>
    <property type="match status" value="1"/>
</dbReference>
<dbReference type="SMART" id="SM00155">
    <property type="entry name" value="PLDc"/>
    <property type="match status" value="2"/>
</dbReference>
<dbReference type="SUPFAM" id="SSF56024">
    <property type="entry name" value="Phospholipase D/nuclease"/>
    <property type="match status" value="2"/>
</dbReference>
<dbReference type="PROSITE" id="PS50035">
    <property type="entry name" value="PLD"/>
    <property type="match status" value="2"/>
</dbReference>